<dbReference type="EMBL" id="AL123456">
    <property type="protein sequence ID" value="CCP43648.1"/>
    <property type="molecule type" value="Genomic_DNA"/>
</dbReference>
<dbReference type="PIR" id="A70783">
    <property type="entry name" value="A70783"/>
</dbReference>
<dbReference type="RefSeq" id="NP_215415.1">
    <property type="nucleotide sequence ID" value="NC_000962.3"/>
</dbReference>
<dbReference type="RefSeq" id="WP_003404687.1">
    <property type="nucleotide sequence ID" value="NZ_NVQJ01000001.1"/>
</dbReference>
<dbReference type="SMR" id="P9WJG7"/>
<dbReference type="STRING" id="83332.Rv0900"/>
<dbReference type="PaxDb" id="83332-Rv0900"/>
<dbReference type="DNASU" id="885179"/>
<dbReference type="GeneID" id="885179"/>
<dbReference type="KEGG" id="mtu:Rv0900"/>
<dbReference type="KEGG" id="mtv:RVBD_0900"/>
<dbReference type="TubercuList" id="Rv0900"/>
<dbReference type="eggNOG" id="ENOG5031QE3">
    <property type="taxonomic scope" value="Bacteria"/>
</dbReference>
<dbReference type="InParanoid" id="P9WJG7"/>
<dbReference type="OrthoDB" id="4752755at2"/>
<dbReference type="Proteomes" id="UP000001584">
    <property type="component" value="Chromosome"/>
</dbReference>
<dbReference type="GO" id="GO:0005886">
    <property type="term" value="C:plasma membrane"/>
    <property type="evidence" value="ECO:0007669"/>
    <property type="project" value="UniProtKB-SubCell"/>
</dbReference>
<dbReference type="GO" id="GO:0051701">
    <property type="term" value="P:biological process involved in interaction with host"/>
    <property type="evidence" value="ECO:0000315"/>
    <property type="project" value="MTBBASE"/>
</dbReference>
<sequence>MDFVIQWSCYLLAFLGGSAVAWVVVTLSIKRASRDEGAAEAPSAAETGAQ</sequence>
<protein>
    <recommendedName>
        <fullName>Uncharacterized membrane protein ArfB</fullName>
    </recommendedName>
</protein>
<reference key="1">
    <citation type="journal article" date="1998" name="Nature">
        <title>Deciphering the biology of Mycobacterium tuberculosis from the complete genome sequence.</title>
        <authorList>
            <person name="Cole S.T."/>
            <person name="Brosch R."/>
            <person name="Parkhill J."/>
            <person name="Garnier T."/>
            <person name="Churcher C.M."/>
            <person name="Harris D.E."/>
            <person name="Gordon S.V."/>
            <person name="Eiglmeier K."/>
            <person name="Gas S."/>
            <person name="Barry C.E. III"/>
            <person name="Tekaia F."/>
            <person name="Badcock K."/>
            <person name="Basham D."/>
            <person name="Brown D."/>
            <person name="Chillingworth T."/>
            <person name="Connor R."/>
            <person name="Davies R.M."/>
            <person name="Devlin K."/>
            <person name="Feltwell T."/>
            <person name="Gentles S."/>
            <person name="Hamlin N."/>
            <person name="Holroyd S."/>
            <person name="Hornsby T."/>
            <person name="Jagels K."/>
            <person name="Krogh A."/>
            <person name="McLean J."/>
            <person name="Moule S."/>
            <person name="Murphy L.D."/>
            <person name="Oliver S."/>
            <person name="Osborne J."/>
            <person name="Quail M.A."/>
            <person name="Rajandream M.A."/>
            <person name="Rogers J."/>
            <person name="Rutter S."/>
            <person name="Seeger K."/>
            <person name="Skelton S."/>
            <person name="Squares S."/>
            <person name="Squares R."/>
            <person name="Sulston J.E."/>
            <person name="Taylor K."/>
            <person name="Whitehead S."/>
            <person name="Barrell B.G."/>
        </authorList>
    </citation>
    <scope>NUCLEOTIDE SEQUENCE [LARGE SCALE GENOMIC DNA]</scope>
    <source>
        <strain>ATCC 25618 / H37Rv</strain>
    </source>
</reference>
<reference key="2">
    <citation type="journal article" date="2011" name="Mol. Microbiol.">
        <title>Expression of the ompATb operon accelerates ammonia secretion and adaptation of Mycobacterium tuberculosis to acidic environments.</title>
        <authorList>
            <person name="Song H."/>
            <person name="Huff J."/>
            <person name="Janik K."/>
            <person name="Walter K."/>
            <person name="Keller C."/>
            <person name="Ehlers S."/>
            <person name="Bossmann S.H."/>
            <person name="Niederweis M."/>
        </authorList>
    </citation>
    <scope>FUNCTION</scope>
    <scope>INDUCTION</scope>
    <scope>DISRUPTION PHENOTYPE</scope>
    <source>
        <strain>ATCC 25618 / H37Rv</strain>
    </source>
</reference>
<name>ARFB_MYCTU</name>
<proteinExistence type="evidence at transcript level"/>
<evidence type="ECO:0000255" key="1"/>
<evidence type="ECO:0000269" key="2">
    <source>
    </source>
</evidence>
<evidence type="ECO:0000305" key="3"/>
<gene>
    <name type="primary">arfB</name>
    <name type="ordered locus">Rv0900</name>
    <name type="ORF">MTCY31.28</name>
</gene>
<keyword id="KW-1003">Cell membrane</keyword>
<keyword id="KW-0472">Membrane</keyword>
<keyword id="KW-1185">Reference proteome</keyword>
<keyword id="KW-0812">Transmembrane</keyword>
<keyword id="KW-1133">Transmembrane helix</keyword>
<feature type="chain" id="PRO_0000014083" description="Uncharacterized membrane protein ArfB">
    <location>
        <begin position="1"/>
        <end position="50"/>
    </location>
</feature>
<feature type="transmembrane region" description="Helical" evidence="1">
    <location>
        <begin position="9"/>
        <end position="29"/>
    </location>
</feature>
<organism>
    <name type="scientific">Mycobacterium tuberculosis (strain ATCC 25618 / H37Rv)</name>
    <dbReference type="NCBI Taxonomy" id="83332"/>
    <lineage>
        <taxon>Bacteria</taxon>
        <taxon>Bacillati</taxon>
        <taxon>Actinomycetota</taxon>
        <taxon>Actinomycetes</taxon>
        <taxon>Mycobacteriales</taxon>
        <taxon>Mycobacteriaceae</taxon>
        <taxon>Mycobacterium</taxon>
        <taxon>Mycobacterium tuberculosis complex</taxon>
    </lineage>
</organism>
<accession>P9WJG7</accession>
<accession>L0T7U8</accession>
<accession>P64755</accession>
<accession>Q10558</accession>
<comment type="function">
    <text evidence="2">Required for wild-type expression of ArfA and ammonia secretion, not however part of an ammonia transporter.</text>
</comment>
<comment type="subcellular location">
    <subcellularLocation>
        <location evidence="3">Cell membrane</location>
        <topology evidence="3">Single-pass membrane protein</topology>
    </subcellularLocation>
</comment>
<comment type="induction">
    <text evidence="2">Part of the arfA-arfB-arfC operon.</text>
</comment>
<comment type="disruption phenotype">
    <text evidence="2">Upon operon disruption no reduction of serine uptake at pH 6.9, no visible effect on outer membrane permeability, however severe delays in ammonia secretion, medium pH neutralization and growth also occur at pH 5.5. Reduced expression of ArfA.</text>
</comment>
<comment type="similarity">
    <text evidence="3">Belongs to the ArfB membrane protein family.</text>
</comment>